<comment type="function">
    <text evidence="1">May control the interaction of photosystem II (PSII) cores with the light-harvesting antenna, regulates electron flow through the 2 photosystem reaction centers. PSII is a light-driven water plastoquinone oxidoreductase, using light energy to abstract electrons from H(2)O, generating a proton gradient subsequently used for ATP formation.</text>
</comment>
<comment type="subunit">
    <text evidence="1">PSII is composed of 1 copy each of membrane proteins PsbA, PsbB, PsbC, PsbD, PsbE, PsbF, PsbH, PsbI, PsbJ, PsbK, PsbL, PsbM, PsbT, PsbY, PsbZ, Psb30/Ycf12, at least 3 peripheral proteins of the oxygen-evolving complex and a large number of cofactors. It forms dimeric complexes.</text>
</comment>
<comment type="subcellular location">
    <subcellularLocation>
        <location evidence="1">Plastid</location>
        <location evidence="1">Chloroplast thylakoid membrane</location>
        <topology evidence="1">Multi-pass membrane protein</topology>
    </subcellularLocation>
</comment>
<comment type="similarity">
    <text evidence="1">Belongs to the PsbZ family.</text>
</comment>
<evidence type="ECO:0000255" key="1">
    <source>
        <dbReference type="HAMAP-Rule" id="MF_00644"/>
    </source>
</evidence>
<protein>
    <recommendedName>
        <fullName evidence="1">Photosystem II reaction center protein Z</fullName>
        <shortName evidence="1">PSII-Z</shortName>
    </recommendedName>
</protein>
<reference key="1">
    <citation type="journal article" date="2007" name="J. Plant Res.">
        <title>The chloroplast genome from a lycophyte (microphyllophyte), Selaginella uncinata, has a unique inversion, transpositions and many gene losses.</title>
        <authorList>
            <person name="Tsuji S."/>
            <person name="Ueda K."/>
            <person name="Nishiyama T."/>
            <person name="Hasebe M."/>
            <person name="Yoshikawa S."/>
            <person name="Konagaya A."/>
            <person name="Nishiuchi T."/>
            <person name="Yamaguchi K."/>
        </authorList>
    </citation>
    <scope>NUCLEOTIDE SEQUENCE [LARGE SCALE GENOMIC DNA]</scope>
</reference>
<proteinExistence type="inferred from homology"/>
<accession>Q2WGC7</accession>
<dbReference type="EMBL" id="AB197035">
    <property type="protein sequence ID" value="BAE00249.1"/>
    <property type="molecule type" value="Genomic_DNA"/>
</dbReference>
<dbReference type="RefSeq" id="YP_009584229.1">
    <property type="nucleotide sequence ID" value="NC_041575.1"/>
</dbReference>
<dbReference type="SMR" id="Q2WGC7"/>
<dbReference type="GeneID" id="39713384"/>
<dbReference type="GO" id="GO:0009535">
    <property type="term" value="C:chloroplast thylakoid membrane"/>
    <property type="evidence" value="ECO:0007669"/>
    <property type="project" value="UniProtKB-SubCell"/>
</dbReference>
<dbReference type="GO" id="GO:0009539">
    <property type="term" value="C:photosystem II reaction center"/>
    <property type="evidence" value="ECO:0007669"/>
    <property type="project" value="InterPro"/>
</dbReference>
<dbReference type="GO" id="GO:0015979">
    <property type="term" value="P:photosynthesis"/>
    <property type="evidence" value="ECO:0007669"/>
    <property type="project" value="UniProtKB-UniRule"/>
</dbReference>
<dbReference type="GO" id="GO:0042549">
    <property type="term" value="P:photosystem II stabilization"/>
    <property type="evidence" value="ECO:0007669"/>
    <property type="project" value="InterPro"/>
</dbReference>
<dbReference type="Gene3D" id="1.10.287.740">
    <property type="entry name" value="Photosystem II PsbZ, reaction centre"/>
    <property type="match status" value="1"/>
</dbReference>
<dbReference type="HAMAP" id="MF_00644">
    <property type="entry name" value="PSII_PsbZ"/>
    <property type="match status" value="1"/>
</dbReference>
<dbReference type="InterPro" id="IPR002644">
    <property type="entry name" value="PSII_PsbZ"/>
</dbReference>
<dbReference type="InterPro" id="IPR036512">
    <property type="entry name" value="PSII_PsbZ_sf"/>
</dbReference>
<dbReference type="NCBIfam" id="TIGR03043">
    <property type="entry name" value="PS_II_psbZ"/>
    <property type="match status" value="1"/>
</dbReference>
<dbReference type="PANTHER" id="PTHR34971">
    <property type="entry name" value="PHOTOSYSTEM II REACTION CENTER PROTEIN Z"/>
    <property type="match status" value="1"/>
</dbReference>
<dbReference type="PANTHER" id="PTHR34971:SF2">
    <property type="entry name" value="PHOTOSYSTEM II REACTION CENTER PROTEIN Z"/>
    <property type="match status" value="1"/>
</dbReference>
<dbReference type="Pfam" id="PF01737">
    <property type="entry name" value="Ycf9"/>
    <property type="match status" value="1"/>
</dbReference>
<dbReference type="SUPFAM" id="SSF161055">
    <property type="entry name" value="PsbZ-like"/>
    <property type="match status" value="1"/>
</dbReference>
<gene>
    <name evidence="1" type="primary">psbZ</name>
</gene>
<feature type="chain" id="PRO_0000277234" description="Photosystem II reaction center protein Z">
    <location>
        <begin position="1"/>
        <end position="62"/>
    </location>
</feature>
<feature type="transmembrane region" description="Helical" evidence="1">
    <location>
        <begin position="8"/>
        <end position="28"/>
    </location>
</feature>
<feature type="transmembrane region" description="Helical" evidence="1">
    <location>
        <begin position="41"/>
        <end position="61"/>
    </location>
</feature>
<keyword id="KW-0150">Chloroplast</keyword>
<keyword id="KW-0472">Membrane</keyword>
<keyword id="KW-0602">Photosynthesis</keyword>
<keyword id="KW-0604">Photosystem II</keyword>
<keyword id="KW-0934">Plastid</keyword>
<keyword id="KW-0674">Reaction center</keyword>
<keyword id="KW-0793">Thylakoid</keyword>
<keyword id="KW-0812">Transmembrane</keyword>
<keyword id="KW-1133">Transmembrane helix</keyword>
<geneLocation type="chloroplast"/>
<name>PSBZ_SELUN</name>
<sequence>MTVALQSAVFASIAIPFIPVIGVPAVFASPDGWSSGKNVVFSGATPRIGPVPLVGILNSSVS</sequence>
<organism>
    <name type="scientific">Selaginella uncinata</name>
    <name type="common">Blue spike-moss</name>
    <name type="synonym">Lycopodium uncinatum</name>
    <dbReference type="NCBI Taxonomy" id="307165"/>
    <lineage>
        <taxon>Eukaryota</taxon>
        <taxon>Viridiplantae</taxon>
        <taxon>Streptophyta</taxon>
        <taxon>Embryophyta</taxon>
        <taxon>Tracheophyta</taxon>
        <taxon>Lycopodiopsida</taxon>
        <taxon>Selaginellales</taxon>
        <taxon>Selaginellaceae</taxon>
        <taxon>Selaginella</taxon>
    </lineage>
</organism>